<organism>
    <name type="scientific">Bacillus thuringiensis subsp. konkukian (strain 97-27)</name>
    <dbReference type="NCBI Taxonomy" id="281309"/>
    <lineage>
        <taxon>Bacteria</taxon>
        <taxon>Bacillati</taxon>
        <taxon>Bacillota</taxon>
        <taxon>Bacilli</taxon>
        <taxon>Bacillales</taxon>
        <taxon>Bacillaceae</taxon>
        <taxon>Bacillus</taxon>
        <taxon>Bacillus cereus group</taxon>
    </lineage>
</organism>
<keyword id="KW-0687">Ribonucleoprotein</keyword>
<keyword id="KW-0689">Ribosomal protein</keyword>
<name>RL27_BACHK</name>
<sequence length="96" mass="10491">MLRLDLQFFASKKGVGSTKNGRDSQSKRLGAKRADGQTVSGGSILYRQRGTKIYPGVNVGRGGDDTLYAKVDGVVRFERLGRDRKQVSVYPVAQEA</sequence>
<proteinExistence type="inferred from homology"/>
<reference key="1">
    <citation type="journal article" date="2006" name="J. Bacteriol.">
        <title>Pathogenomic sequence analysis of Bacillus cereus and Bacillus thuringiensis isolates closely related to Bacillus anthracis.</title>
        <authorList>
            <person name="Han C.S."/>
            <person name="Xie G."/>
            <person name="Challacombe J.F."/>
            <person name="Altherr M.R."/>
            <person name="Bhotika S.S."/>
            <person name="Bruce D."/>
            <person name="Campbell C.S."/>
            <person name="Campbell M.L."/>
            <person name="Chen J."/>
            <person name="Chertkov O."/>
            <person name="Cleland C."/>
            <person name="Dimitrijevic M."/>
            <person name="Doggett N.A."/>
            <person name="Fawcett J.J."/>
            <person name="Glavina T."/>
            <person name="Goodwin L.A."/>
            <person name="Hill K.K."/>
            <person name="Hitchcock P."/>
            <person name="Jackson P.J."/>
            <person name="Keim P."/>
            <person name="Kewalramani A.R."/>
            <person name="Longmire J."/>
            <person name="Lucas S."/>
            <person name="Malfatti S."/>
            <person name="McMurry K."/>
            <person name="Meincke L.J."/>
            <person name="Misra M."/>
            <person name="Moseman B.L."/>
            <person name="Mundt M."/>
            <person name="Munk A.C."/>
            <person name="Okinaka R.T."/>
            <person name="Parson-Quintana B."/>
            <person name="Reilly L.P."/>
            <person name="Richardson P."/>
            <person name="Robinson D.L."/>
            <person name="Rubin E."/>
            <person name="Saunders E."/>
            <person name="Tapia R."/>
            <person name="Tesmer J.G."/>
            <person name="Thayer N."/>
            <person name="Thompson L.S."/>
            <person name="Tice H."/>
            <person name="Ticknor L.O."/>
            <person name="Wills P.L."/>
            <person name="Brettin T.S."/>
            <person name="Gilna P."/>
        </authorList>
    </citation>
    <scope>NUCLEOTIDE SEQUENCE [LARGE SCALE GENOMIC DNA]</scope>
    <source>
        <strain>97-27</strain>
    </source>
</reference>
<gene>
    <name evidence="2" type="primary">rpmA</name>
    <name type="ordered locus">BT9727_4176</name>
</gene>
<comment type="PTM">
    <text evidence="1">The N-terminus is cleaved by ribosomal processing cysteine protease Prp.</text>
</comment>
<comment type="similarity">
    <text evidence="2">Belongs to the bacterial ribosomal protein bL27 family.</text>
</comment>
<accession>Q6HD83</accession>
<protein>
    <recommendedName>
        <fullName evidence="2">Large ribosomal subunit protein bL27</fullName>
    </recommendedName>
    <alternativeName>
        <fullName evidence="4">50S ribosomal protein L27</fullName>
    </alternativeName>
</protein>
<feature type="propeptide" id="PRO_0000459866" evidence="1">
    <location>
        <begin position="1"/>
        <end position="9"/>
    </location>
</feature>
<feature type="chain" id="PRO_0000181040" description="Large ribosomal subunit protein bL27">
    <location>
        <begin position="10"/>
        <end position="96"/>
    </location>
</feature>
<feature type="region of interest" description="Disordered" evidence="3">
    <location>
        <begin position="14"/>
        <end position="36"/>
    </location>
</feature>
<dbReference type="EMBL" id="AE017355">
    <property type="protein sequence ID" value="AAT63739.1"/>
    <property type="molecule type" value="Genomic_DNA"/>
</dbReference>
<dbReference type="RefSeq" id="WP_000944957.1">
    <property type="nucleotide sequence ID" value="NC_005957.1"/>
</dbReference>
<dbReference type="RefSeq" id="YP_038493.1">
    <property type="nucleotide sequence ID" value="NC_005957.1"/>
</dbReference>
<dbReference type="SMR" id="Q6HD83"/>
<dbReference type="GeneID" id="92884982"/>
<dbReference type="KEGG" id="btk:BT9727_4176"/>
<dbReference type="PATRIC" id="fig|281309.8.peg.4454"/>
<dbReference type="HOGENOM" id="CLU_095424_4_0_9"/>
<dbReference type="PRO" id="PR:Q6HD83"/>
<dbReference type="Proteomes" id="UP000001301">
    <property type="component" value="Chromosome"/>
</dbReference>
<dbReference type="GO" id="GO:0022625">
    <property type="term" value="C:cytosolic large ribosomal subunit"/>
    <property type="evidence" value="ECO:0007669"/>
    <property type="project" value="TreeGrafter"/>
</dbReference>
<dbReference type="GO" id="GO:0003735">
    <property type="term" value="F:structural constituent of ribosome"/>
    <property type="evidence" value="ECO:0007669"/>
    <property type="project" value="InterPro"/>
</dbReference>
<dbReference type="GO" id="GO:0006412">
    <property type="term" value="P:translation"/>
    <property type="evidence" value="ECO:0007669"/>
    <property type="project" value="UniProtKB-UniRule"/>
</dbReference>
<dbReference type="FunFam" id="2.40.50.100:FF:000004">
    <property type="entry name" value="50S ribosomal protein L27"/>
    <property type="match status" value="1"/>
</dbReference>
<dbReference type="Gene3D" id="2.40.50.100">
    <property type="match status" value="1"/>
</dbReference>
<dbReference type="HAMAP" id="MF_00539">
    <property type="entry name" value="Ribosomal_bL27"/>
    <property type="match status" value="1"/>
</dbReference>
<dbReference type="InterPro" id="IPR001684">
    <property type="entry name" value="Ribosomal_bL27"/>
</dbReference>
<dbReference type="InterPro" id="IPR018261">
    <property type="entry name" value="Ribosomal_bL27_CS"/>
</dbReference>
<dbReference type="NCBIfam" id="TIGR00062">
    <property type="entry name" value="L27"/>
    <property type="match status" value="1"/>
</dbReference>
<dbReference type="PANTHER" id="PTHR15893:SF0">
    <property type="entry name" value="LARGE RIBOSOMAL SUBUNIT PROTEIN BL27M"/>
    <property type="match status" value="1"/>
</dbReference>
<dbReference type="PANTHER" id="PTHR15893">
    <property type="entry name" value="RIBOSOMAL PROTEIN L27"/>
    <property type="match status" value="1"/>
</dbReference>
<dbReference type="Pfam" id="PF01016">
    <property type="entry name" value="Ribosomal_L27"/>
    <property type="match status" value="1"/>
</dbReference>
<dbReference type="PRINTS" id="PR00063">
    <property type="entry name" value="RIBOSOMALL27"/>
</dbReference>
<dbReference type="SUPFAM" id="SSF110324">
    <property type="entry name" value="Ribosomal L27 protein-like"/>
    <property type="match status" value="1"/>
</dbReference>
<dbReference type="PROSITE" id="PS00831">
    <property type="entry name" value="RIBOSOMAL_L27"/>
    <property type="match status" value="1"/>
</dbReference>
<evidence type="ECO:0000250" key="1">
    <source>
        <dbReference type="UniProtKB" id="Q2FXT0"/>
    </source>
</evidence>
<evidence type="ECO:0000255" key="2">
    <source>
        <dbReference type="HAMAP-Rule" id="MF_00539"/>
    </source>
</evidence>
<evidence type="ECO:0000256" key="3">
    <source>
        <dbReference type="SAM" id="MobiDB-lite"/>
    </source>
</evidence>
<evidence type="ECO:0000305" key="4"/>